<accession>C0HLY0</accession>
<reference evidence="4" key="1">
    <citation type="journal article" date="2016" name="Rapid Commun. Mass Spectrom.">
        <title>LTQ Orbitrap Velos in routine de novo sequencing of non-tryptic skin peptides from the frog Rana latastei with traditional and reliable manual spectra interpretation.</title>
        <authorList>
            <person name="Samgina T.Y."/>
            <person name="Tolpina M.D."/>
            <person name="Trebse P."/>
            <person name="Torkar G."/>
            <person name="Artemenko K.A."/>
            <person name="Bergquist J."/>
            <person name="Lebedev A.T."/>
        </authorList>
    </citation>
    <scope>PROTEIN SEQUENCE</scope>
    <scope>IDENTIFICATION BY MASS SPECTROMETRY</scope>
    <scope>SUBCELLULAR LOCATION</scope>
    <scope>TISSUE SPECIFICITY</scope>
    <scope>DISULFIDE BOND</scope>
</reference>
<proteinExistence type="evidence at protein level"/>
<organism>
    <name type="scientific">Rana latastei</name>
    <name type="common">Italian agile frog</name>
    <dbReference type="NCBI Taxonomy" id="151453"/>
    <lineage>
        <taxon>Eukaryota</taxon>
        <taxon>Metazoa</taxon>
        <taxon>Chordata</taxon>
        <taxon>Craniata</taxon>
        <taxon>Vertebrata</taxon>
        <taxon>Euteleostomi</taxon>
        <taxon>Amphibia</taxon>
        <taxon>Batrachia</taxon>
        <taxon>Anura</taxon>
        <taxon>Neobatrachia</taxon>
        <taxon>Ranoidea</taxon>
        <taxon>Ranidae</taxon>
        <taxon>Rana</taxon>
        <taxon>Rana</taxon>
    </lineage>
</organism>
<protein>
    <recommendedName>
        <fullName evidence="3">Brevinin-2LT</fullName>
    </recommendedName>
</protein>
<evidence type="ECO:0000250" key="1">
    <source>
        <dbReference type="UniProtKB" id="P82740"/>
    </source>
</evidence>
<evidence type="ECO:0000269" key="2">
    <source>
    </source>
</evidence>
<evidence type="ECO:0000303" key="3">
    <source>
    </source>
</evidence>
<evidence type="ECO:0000305" key="4"/>
<evidence type="ECO:0000305" key="5">
    <source>
    </source>
</evidence>
<feature type="chain" id="PRO_0000454220" description="Brevinin-2LT">
    <location>
        <begin position="1"/>
        <end position="33"/>
    </location>
</feature>
<feature type="disulfide bond" evidence="2">
    <location>
        <begin position="27"/>
        <end position="33"/>
    </location>
</feature>
<feature type="unsure residue" description="Assigned by comparison with orthologs" evidence="5">
    <location>
        <position position="2"/>
    </location>
</feature>
<feature type="unsure residue" description="Assigned by comparison with orthologs" evidence="5">
    <location>
        <position position="6"/>
    </location>
</feature>
<feature type="unsure residue" description="Assigned by comparison with orthologs" evidence="5">
    <location>
        <position position="21"/>
    </location>
</feature>
<feature type="unsure residue" description="Assigned by comparison with orthologs" evidence="5">
    <location>
        <position position="25"/>
    </location>
</feature>
<feature type="unsure residue" description="Assigned by comparison with orthologs" evidence="5">
    <location>
        <position position="29"/>
    </location>
</feature>
<keyword id="KW-0878">Amphibian defense peptide</keyword>
<keyword id="KW-0044">Antibiotic</keyword>
<keyword id="KW-0929">Antimicrobial</keyword>
<keyword id="KW-0903">Direct protein sequencing</keyword>
<keyword id="KW-1015">Disulfide bond</keyword>
<keyword id="KW-0964">Secreted</keyword>
<sequence length="33" mass="3360">GLMSVLKKAGKHVAKNVAASLMDSLKCKITGGC</sequence>
<dbReference type="SMR" id="C0HLY0"/>
<dbReference type="GO" id="GO:0005576">
    <property type="term" value="C:extracellular region"/>
    <property type="evidence" value="ECO:0007669"/>
    <property type="project" value="UniProtKB-SubCell"/>
</dbReference>
<dbReference type="GO" id="GO:0042742">
    <property type="term" value="P:defense response to bacterium"/>
    <property type="evidence" value="ECO:0007669"/>
    <property type="project" value="UniProtKB-KW"/>
</dbReference>
<dbReference type="InterPro" id="IPR012521">
    <property type="entry name" value="Antimicrobial_frog_2"/>
</dbReference>
<dbReference type="Pfam" id="PF08023">
    <property type="entry name" value="Antimicrobial_2"/>
    <property type="match status" value="1"/>
</dbReference>
<name>BR2_RANLT</name>
<comment type="function">
    <text evidence="1">Has antibacterial activity.</text>
</comment>
<comment type="subcellular location">
    <subcellularLocation>
        <location evidence="2">Secreted</location>
    </subcellularLocation>
</comment>
<comment type="tissue specificity">
    <text evidence="5">Expressed by the skin glands.</text>
</comment>
<comment type="mass spectrometry" mass="3356.82" method="Electrospray" evidence="2"/>
<comment type="similarity">
    <text evidence="4">Belongs to the frog skin active peptide (FSAP) family. Brevinin subfamily.</text>
</comment>